<gene>
    <name evidence="1" type="primary">fluC4</name>
    <name evidence="1" type="synonym">crcB4</name>
    <name type="ordered locus">BMEII0470</name>
</gene>
<keyword id="KW-0997">Cell inner membrane</keyword>
<keyword id="KW-1003">Cell membrane</keyword>
<keyword id="KW-0407">Ion channel</keyword>
<keyword id="KW-0406">Ion transport</keyword>
<keyword id="KW-0472">Membrane</keyword>
<keyword id="KW-0479">Metal-binding</keyword>
<keyword id="KW-0915">Sodium</keyword>
<keyword id="KW-0812">Transmembrane</keyword>
<keyword id="KW-1133">Transmembrane helix</keyword>
<keyword id="KW-0813">Transport</keyword>
<organism>
    <name type="scientific">Brucella melitensis biotype 1 (strain ATCC 23456 / CCUG 17765 / NCTC 10094 / 16M)</name>
    <dbReference type="NCBI Taxonomy" id="224914"/>
    <lineage>
        <taxon>Bacteria</taxon>
        <taxon>Pseudomonadati</taxon>
        <taxon>Pseudomonadota</taxon>
        <taxon>Alphaproteobacteria</taxon>
        <taxon>Hyphomicrobiales</taxon>
        <taxon>Brucellaceae</taxon>
        <taxon>Brucella/Ochrobactrum group</taxon>
        <taxon>Brucella</taxon>
    </lineage>
</organism>
<protein>
    <recommendedName>
        <fullName evidence="1">Fluoride-specific ion channel FluC 4</fullName>
    </recommendedName>
</protein>
<comment type="function">
    <text evidence="1">Fluoride-specific ion channel. Important for reducing fluoride concentration in the cell, thus reducing its toxicity.</text>
</comment>
<comment type="catalytic activity">
    <reaction evidence="1">
        <text>fluoride(in) = fluoride(out)</text>
        <dbReference type="Rhea" id="RHEA:76159"/>
        <dbReference type="ChEBI" id="CHEBI:17051"/>
    </reaction>
    <physiologicalReaction direction="left-to-right" evidence="1">
        <dbReference type="Rhea" id="RHEA:76160"/>
    </physiologicalReaction>
</comment>
<comment type="activity regulation">
    <text evidence="1">Na(+) is not transported, but it plays an essential structural role and its presence is essential for fluoride channel function.</text>
</comment>
<comment type="subcellular location">
    <subcellularLocation>
        <location evidence="1">Cell inner membrane</location>
        <topology evidence="1">Multi-pass membrane protein</topology>
    </subcellularLocation>
</comment>
<comment type="similarity">
    <text evidence="1">Belongs to the fluoride channel Fluc/FEX (TC 1.A.43) family.</text>
</comment>
<evidence type="ECO:0000255" key="1">
    <source>
        <dbReference type="HAMAP-Rule" id="MF_00454"/>
    </source>
</evidence>
<accession>Q8YCQ8</accession>
<dbReference type="EMBL" id="AE008918">
    <property type="protein sequence ID" value="AAL53712.1"/>
    <property type="molecule type" value="Genomic_DNA"/>
</dbReference>
<dbReference type="PIR" id="AE3568">
    <property type="entry name" value="AE3568"/>
</dbReference>
<dbReference type="SMR" id="Q8YCQ8"/>
<dbReference type="KEGG" id="bme:BMEII0470"/>
<dbReference type="eggNOG" id="COG0239">
    <property type="taxonomic scope" value="Bacteria"/>
</dbReference>
<dbReference type="Proteomes" id="UP000000419">
    <property type="component" value="Chromosome II"/>
</dbReference>
<dbReference type="GO" id="GO:0005886">
    <property type="term" value="C:plasma membrane"/>
    <property type="evidence" value="ECO:0007669"/>
    <property type="project" value="UniProtKB-SubCell"/>
</dbReference>
<dbReference type="GO" id="GO:0062054">
    <property type="term" value="F:fluoride channel activity"/>
    <property type="evidence" value="ECO:0007669"/>
    <property type="project" value="UniProtKB-UniRule"/>
</dbReference>
<dbReference type="GO" id="GO:0046872">
    <property type="term" value="F:metal ion binding"/>
    <property type="evidence" value="ECO:0007669"/>
    <property type="project" value="UniProtKB-KW"/>
</dbReference>
<dbReference type="GO" id="GO:0140114">
    <property type="term" value="P:cellular detoxification of fluoride"/>
    <property type="evidence" value="ECO:0007669"/>
    <property type="project" value="UniProtKB-UniRule"/>
</dbReference>
<dbReference type="HAMAP" id="MF_00454">
    <property type="entry name" value="FluC"/>
    <property type="match status" value="1"/>
</dbReference>
<dbReference type="InterPro" id="IPR003691">
    <property type="entry name" value="FluC"/>
</dbReference>
<dbReference type="NCBIfam" id="NF010829">
    <property type="entry name" value="PRK14233.1"/>
    <property type="match status" value="1"/>
</dbReference>
<dbReference type="PANTHER" id="PTHR28259">
    <property type="entry name" value="FLUORIDE EXPORT PROTEIN 1-RELATED"/>
    <property type="match status" value="1"/>
</dbReference>
<dbReference type="PANTHER" id="PTHR28259:SF1">
    <property type="entry name" value="FLUORIDE EXPORT PROTEIN 1-RELATED"/>
    <property type="match status" value="1"/>
</dbReference>
<dbReference type="Pfam" id="PF02537">
    <property type="entry name" value="CRCB"/>
    <property type="match status" value="1"/>
</dbReference>
<name>FLUC4_BRUME</name>
<proteinExistence type="inferred from homology"/>
<sequence length="115" mass="12279">MRFFLSGYVGRRIGETFPWGTFVVNVSGAFVIGTAAGLGARLGGIFSTTIFHEFIMVGLLGGYTTVSSFCLQSVNLMLDGEQRQALFNIVASALLCVLAVAAGYGGIMWIMEWPG</sequence>
<reference key="1">
    <citation type="journal article" date="2002" name="Proc. Natl. Acad. Sci. U.S.A.">
        <title>The genome sequence of the facultative intracellular pathogen Brucella melitensis.</title>
        <authorList>
            <person name="DelVecchio V.G."/>
            <person name="Kapatral V."/>
            <person name="Redkar R.J."/>
            <person name="Patra G."/>
            <person name="Mujer C."/>
            <person name="Los T."/>
            <person name="Ivanova N."/>
            <person name="Anderson I."/>
            <person name="Bhattacharyya A."/>
            <person name="Lykidis A."/>
            <person name="Reznik G."/>
            <person name="Jablonski L."/>
            <person name="Larsen N."/>
            <person name="D'Souza M."/>
            <person name="Bernal A."/>
            <person name="Mazur M."/>
            <person name="Goltsman E."/>
            <person name="Selkov E."/>
            <person name="Elzer P.H."/>
            <person name="Hagius S."/>
            <person name="O'Callaghan D."/>
            <person name="Letesson J.-J."/>
            <person name="Haselkorn R."/>
            <person name="Kyrpides N.C."/>
            <person name="Overbeek R."/>
        </authorList>
    </citation>
    <scope>NUCLEOTIDE SEQUENCE [LARGE SCALE GENOMIC DNA]</scope>
    <source>
        <strain>ATCC 23456 / CCUG 17765 / NCTC 10094 / 16M</strain>
    </source>
</reference>
<feature type="chain" id="PRO_0000110074" description="Fluoride-specific ion channel FluC 4">
    <location>
        <begin position="1"/>
        <end position="115"/>
    </location>
</feature>
<feature type="transmembrane region" description="Helical" evidence="1">
    <location>
        <begin position="19"/>
        <end position="39"/>
    </location>
</feature>
<feature type="transmembrane region" description="Helical" evidence="1">
    <location>
        <begin position="42"/>
        <end position="62"/>
    </location>
</feature>
<feature type="transmembrane region" description="Helical" evidence="1">
    <location>
        <begin position="89"/>
        <end position="109"/>
    </location>
</feature>
<feature type="binding site" evidence="1">
    <location>
        <position position="61"/>
    </location>
    <ligand>
        <name>Na(+)</name>
        <dbReference type="ChEBI" id="CHEBI:29101"/>
        <note>structural</note>
    </ligand>
</feature>
<feature type="binding site" evidence="1">
    <location>
        <position position="64"/>
    </location>
    <ligand>
        <name>Na(+)</name>
        <dbReference type="ChEBI" id="CHEBI:29101"/>
        <note>structural</note>
    </ligand>
</feature>